<comment type="function">
    <text evidence="1">Chaperone involved in the maturation of iron-sulfur cluster-containing proteins. Has a low intrinsic ATPase activity which is markedly stimulated by HscB.</text>
</comment>
<comment type="similarity">
    <text evidence="1">Belongs to the heat shock protein 70 family.</text>
</comment>
<reference key="1">
    <citation type="submission" date="2008-02" db="EMBL/GenBank/DDBJ databases">
        <title>Complete sequence of chromosome 1 of Burkholderia cenocepacia MC0-3.</title>
        <authorList>
            <person name="Copeland A."/>
            <person name="Lucas S."/>
            <person name="Lapidus A."/>
            <person name="Barry K."/>
            <person name="Bruce D."/>
            <person name="Goodwin L."/>
            <person name="Glavina del Rio T."/>
            <person name="Dalin E."/>
            <person name="Tice H."/>
            <person name="Pitluck S."/>
            <person name="Chain P."/>
            <person name="Malfatti S."/>
            <person name="Shin M."/>
            <person name="Vergez L."/>
            <person name="Schmutz J."/>
            <person name="Larimer F."/>
            <person name="Land M."/>
            <person name="Hauser L."/>
            <person name="Kyrpides N."/>
            <person name="Mikhailova N."/>
            <person name="Tiedje J."/>
            <person name="Richardson P."/>
        </authorList>
    </citation>
    <scope>NUCLEOTIDE SEQUENCE [LARGE SCALE GENOMIC DNA]</scope>
    <source>
        <strain>MC0-3</strain>
    </source>
</reference>
<gene>
    <name evidence="1" type="primary">hscA</name>
    <name type="ordered locus">Bcenmc03_2139</name>
</gene>
<keyword id="KW-0067">ATP-binding</keyword>
<keyword id="KW-0143">Chaperone</keyword>
<keyword id="KW-0547">Nucleotide-binding</keyword>
<evidence type="ECO:0000255" key="1">
    <source>
        <dbReference type="HAMAP-Rule" id="MF_00679"/>
    </source>
</evidence>
<feature type="chain" id="PRO_1000131667" description="Chaperone protein HscA homolog">
    <location>
        <begin position="1"/>
        <end position="622"/>
    </location>
</feature>
<accession>B1JV00</accession>
<name>HSCA_BURO0</name>
<organism>
    <name type="scientific">Burkholderia orbicola (strain MC0-3)</name>
    <dbReference type="NCBI Taxonomy" id="406425"/>
    <lineage>
        <taxon>Bacteria</taxon>
        <taxon>Pseudomonadati</taxon>
        <taxon>Pseudomonadota</taxon>
        <taxon>Betaproteobacteria</taxon>
        <taxon>Burkholderiales</taxon>
        <taxon>Burkholderiaceae</taxon>
        <taxon>Burkholderia</taxon>
        <taxon>Burkholderia cepacia complex</taxon>
        <taxon>Burkholderia orbicola</taxon>
    </lineage>
</organism>
<proteinExistence type="inferred from homology"/>
<dbReference type="EMBL" id="CP000958">
    <property type="protein sequence ID" value="ACA91300.1"/>
    <property type="molecule type" value="Genomic_DNA"/>
</dbReference>
<dbReference type="RefSeq" id="WP_012328820.1">
    <property type="nucleotide sequence ID" value="NC_010508.1"/>
</dbReference>
<dbReference type="SMR" id="B1JV00"/>
<dbReference type="GeneID" id="83048923"/>
<dbReference type="KEGG" id="bcm:Bcenmc03_2139"/>
<dbReference type="HOGENOM" id="CLU_005965_2_4_4"/>
<dbReference type="Proteomes" id="UP000002169">
    <property type="component" value="Chromosome 1"/>
</dbReference>
<dbReference type="GO" id="GO:0005524">
    <property type="term" value="F:ATP binding"/>
    <property type="evidence" value="ECO:0007669"/>
    <property type="project" value="UniProtKB-KW"/>
</dbReference>
<dbReference type="GO" id="GO:0016887">
    <property type="term" value="F:ATP hydrolysis activity"/>
    <property type="evidence" value="ECO:0007669"/>
    <property type="project" value="UniProtKB-UniRule"/>
</dbReference>
<dbReference type="GO" id="GO:0140662">
    <property type="term" value="F:ATP-dependent protein folding chaperone"/>
    <property type="evidence" value="ECO:0007669"/>
    <property type="project" value="InterPro"/>
</dbReference>
<dbReference type="GO" id="GO:0051082">
    <property type="term" value="F:unfolded protein binding"/>
    <property type="evidence" value="ECO:0007669"/>
    <property type="project" value="InterPro"/>
</dbReference>
<dbReference type="GO" id="GO:0016226">
    <property type="term" value="P:iron-sulfur cluster assembly"/>
    <property type="evidence" value="ECO:0007669"/>
    <property type="project" value="InterPro"/>
</dbReference>
<dbReference type="CDD" id="cd10236">
    <property type="entry name" value="ASKHA_NBD_HSP70_HscA"/>
    <property type="match status" value="1"/>
</dbReference>
<dbReference type="FunFam" id="3.30.420.40:FF:000046">
    <property type="entry name" value="Chaperone protein HscA"/>
    <property type="match status" value="1"/>
</dbReference>
<dbReference type="FunFam" id="2.60.34.10:FF:000005">
    <property type="entry name" value="Chaperone protein HscA homolog"/>
    <property type="match status" value="1"/>
</dbReference>
<dbReference type="Gene3D" id="1.20.1270.10">
    <property type="match status" value="1"/>
</dbReference>
<dbReference type="Gene3D" id="3.30.420.40">
    <property type="match status" value="2"/>
</dbReference>
<dbReference type="Gene3D" id="3.90.640.10">
    <property type="entry name" value="Actin, Chain A, domain 4"/>
    <property type="match status" value="1"/>
</dbReference>
<dbReference type="Gene3D" id="2.60.34.10">
    <property type="entry name" value="Substrate Binding Domain Of DNAk, Chain A, domain 1"/>
    <property type="match status" value="1"/>
</dbReference>
<dbReference type="HAMAP" id="MF_00679">
    <property type="entry name" value="HscA"/>
    <property type="match status" value="1"/>
</dbReference>
<dbReference type="InterPro" id="IPR043129">
    <property type="entry name" value="ATPase_NBD"/>
</dbReference>
<dbReference type="InterPro" id="IPR018181">
    <property type="entry name" value="Heat_shock_70_CS"/>
</dbReference>
<dbReference type="InterPro" id="IPR042039">
    <property type="entry name" value="HscA_NBD"/>
</dbReference>
<dbReference type="InterPro" id="IPR029048">
    <property type="entry name" value="HSP70_C_sf"/>
</dbReference>
<dbReference type="InterPro" id="IPR029047">
    <property type="entry name" value="HSP70_peptide-bd_sf"/>
</dbReference>
<dbReference type="InterPro" id="IPR013126">
    <property type="entry name" value="Hsp_70_fam"/>
</dbReference>
<dbReference type="InterPro" id="IPR010236">
    <property type="entry name" value="ISC_FeS_clus_asmbl_HscA"/>
</dbReference>
<dbReference type="NCBIfam" id="TIGR01991">
    <property type="entry name" value="HscA"/>
    <property type="match status" value="1"/>
</dbReference>
<dbReference type="NCBIfam" id="NF003520">
    <property type="entry name" value="PRK05183.1"/>
    <property type="match status" value="1"/>
</dbReference>
<dbReference type="PANTHER" id="PTHR19375">
    <property type="entry name" value="HEAT SHOCK PROTEIN 70KDA"/>
    <property type="match status" value="1"/>
</dbReference>
<dbReference type="Pfam" id="PF00012">
    <property type="entry name" value="HSP70"/>
    <property type="match status" value="1"/>
</dbReference>
<dbReference type="PRINTS" id="PR00301">
    <property type="entry name" value="HEATSHOCK70"/>
</dbReference>
<dbReference type="SUPFAM" id="SSF53067">
    <property type="entry name" value="Actin-like ATPase domain"/>
    <property type="match status" value="2"/>
</dbReference>
<dbReference type="SUPFAM" id="SSF100934">
    <property type="entry name" value="Heat shock protein 70kD (HSP70), C-terminal subdomain"/>
    <property type="match status" value="1"/>
</dbReference>
<dbReference type="SUPFAM" id="SSF100920">
    <property type="entry name" value="Heat shock protein 70kD (HSP70), peptide-binding domain"/>
    <property type="match status" value="1"/>
</dbReference>
<dbReference type="PROSITE" id="PS00297">
    <property type="entry name" value="HSP70_1"/>
    <property type="match status" value="1"/>
</dbReference>
<dbReference type="PROSITE" id="PS00329">
    <property type="entry name" value="HSP70_2"/>
    <property type="match status" value="1"/>
</dbReference>
<dbReference type="PROSITE" id="PS01036">
    <property type="entry name" value="HSP70_3"/>
    <property type="match status" value="1"/>
</dbReference>
<protein>
    <recommendedName>
        <fullName evidence="1">Chaperone protein HscA homolog</fullName>
    </recommendedName>
</protein>
<sequence>MALLQISEPGMAPAPHQRRLAVGIDLGTTNSLVAAVRNSVPEVLPDEAGRVLLPSVVRYLEKGGRRIGHEAKEQAATDPRNTIVSVKRFMGRGKAEVEGAANAPYEFVDAPGMVQIRTIDGVKSPVEVSAEILATLRYRAEDSLGDELVGAVITVPAYFDDAQRQATKDAARLAGLNVLRLLNEPTAAAIAYGLDNAAEGLYAVYDLGGGTFDLSILKLTKGVFEVLAAGGDSALGGDDFDHALFGHVLAQAGIDAKTLAPEDVRLLLDRVRVLKETLSSAPEAALDVTLSSGAHLVQTISHDTFASLVEPLVQRTLTPTRKALRDAQVTPADIKGVVLVGGATRMPVIRDAVAKYFGQPPLVNLDPDQVVALGAAIQADLLAGNRGTGDDWLLLDVIPLSLGVETMGGLVEKIIPRNSTIPIARAQEFTTFKDGQTAMAIHVVQGERELVADCRSLARFELRGIPPMTAGAARIRVTYQVDADGLLSVFAREQLSGVEASVVVKPSYGLADDDIAKMLEDSFKTAEIDMRARALREAQVEAERMLEATQAALAADGELLEADERAQVDTLAAALRAVAQGDDTNAIEAATKALADGTDEFAARRMDKSIKRALSGRRLDEI</sequence>